<sequence>MLIDIIRAVILGIVEGVTEFLPVSSTGHLLLAERFFNLGEGNFWKSFAVLIQLGAILAILALYFVKLWRIALGMFTDANARRFVIGVLVAFLPAAVIGAAFGGYIKHYLFNPWVVCFSLIVGGAILLWVDQLDLKPRYHDATAFPLLTYFYIGCAQCTAMIPGVSRSGASIVAAMLLGTDKRSAAEFSFFLAIPTMLGAFVYDLYKNHADMTADNLIIVAIGFVVSFITAIIVVKTFLTYVTRHGFELFAWWRVIVGTLGLIALALGL</sequence>
<name>UPPP_RHOPT</name>
<feature type="chain" id="PRO_1000197397" description="Undecaprenyl-diphosphatase">
    <location>
        <begin position="1"/>
        <end position="268"/>
    </location>
</feature>
<feature type="transmembrane region" description="Helical" evidence="1">
    <location>
        <begin position="47"/>
        <end position="67"/>
    </location>
</feature>
<feature type="transmembrane region" description="Helical" evidence="1">
    <location>
        <begin position="83"/>
        <end position="103"/>
    </location>
</feature>
<feature type="transmembrane region" description="Helical" evidence="1">
    <location>
        <begin position="109"/>
        <end position="129"/>
    </location>
</feature>
<feature type="transmembrane region" description="Helical" evidence="1">
    <location>
        <begin position="144"/>
        <end position="164"/>
    </location>
</feature>
<feature type="transmembrane region" description="Helical" evidence="1">
    <location>
        <begin position="184"/>
        <end position="204"/>
    </location>
</feature>
<feature type="transmembrane region" description="Helical" evidence="1">
    <location>
        <begin position="217"/>
        <end position="237"/>
    </location>
</feature>
<feature type="transmembrane region" description="Helical" evidence="1">
    <location>
        <begin position="248"/>
        <end position="268"/>
    </location>
</feature>
<accession>B3Q5X8</accession>
<evidence type="ECO:0000255" key="1">
    <source>
        <dbReference type="HAMAP-Rule" id="MF_01006"/>
    </source>
</evidence>
<protein>
    <recommendedName>
        <fullName evidence="1">Undecaprenyl-diphosphatase</fullName>
        <ecNumber evidence="1">3.6.1.27</ecNumber>
    </recommendedName>
    <alternativeName>
        <fullName evidence="1">Bacitracin resistance protein</fullName>
    </alternativeName>
    <alternativeName>
        <fullName evidence="1">Undecaprenyl pyrophosphate phosphatase</fullName>
    </alternativeName>
</protein>
<proteinExistence type="inferred from homology"/>
<dbReference type="EC" id="3.6.1.27" evidence="1"/>
<dbReference type="EMBL" id="CP001096">
    <property type="protein sequence ID" value="ACE98607.1"/>
    <property type="molecule type" value="Genomic_DNA"/>
</dbReference>
<dbReference type="RefSeq" id="WP_011155615.1">
    <property type="nucleotide sequence ID" value="NC_011004.1"/>
</dbReference>
<dbReference type="SMR" id="B3Q5X8"/>
<dbReference type="KEGG" id="rpt:Rpal_0045"/>
<dbReference type="HOGENOM" id="CLU_060296_2_0_5"/>
<dbReference type="OrthoDB" id="9808289at2"/>
<dbReference type="Proteomes" id="UP000001725">
    <property type="component" value="Chromosome"/>
</dbReference>
<dbReference type="GO" id="GO:0005886">
    <property type="term" value="C:plasma membrane"/>
    <property type="evidence" value="ECO:0007669"/>
    <property type="project" value="UniProtKB-SubCell"/>
</dbReference>
<dbReference type="GO" id="GO:0050380">
    <property type="term" value="F:undecaprenyl-diphosphatase activity"/>
    <property type="evidence" value="ECO:0007669"/>
    <property type="project" value="UniProtKB-UniRule"/>
</dbReference>
<dbReference type="GO" id="GO:0071555">
    <property type="term" value="P:cell wall organization"/>
    <property type="evidence" value="ECO:0007669"/>
    <property type="project" value="UniProtKB-KW"/>
</dbReference>
<dbReference type="GO" id="GO:0009252">
    <property type="term" value="P:peptidoglycan biosynthetic process"/>
    <property type="evidence" value="ECO:0007669"/>
    <property type="project" value="UniProtKB-KW"/>
</dbReference>
<dbReference type="GO" id="GO:0008360">
    <property type="term" value="P:regulation of cell shape"/>
    <property type="evidence" value="ECO:0007669"/>
    <property type="project" value="UniProtKB-KW"/>
</dbReference>
<dbReference type="GO" id="GO:0046677">
    <property type="term" value="P:response to antibiotic"/>
    <property type="evidence" value="ECO:0007669"/>
    <property type="project" value="UniProtKB-UniRule"/>
</dbReference>
<dbReference type="HAMAP" id="MF_01006">
    <property type="entry name" value="Undec_diphosphatase"/>
    <property type="match status" value="1"/>
</dbReference>
<dbReference type="InterPro" id="IPR003824">
    <property type="entry name" value="UppP"/>
</dbReference>
<dbReference type="NCBIfam" id="NF001389">
    <property type="entry name" value="PRK00281.1-2"/>
    <property type="match status" value="1"/>
</dbReference>
<dbReference type="NCBIfam" id="NF001390">
    <property type="entry name" value="PRK00281.1-4"/>
    <property type="match status" value="1"/>
</dbReference>
<dbReference type="NCBIfam" id="TIGR00753">
    <property type="entry name" value="undec_PP_bacA"/>
    <property type="match status" value="1"/>
</dbReference>
<dbReference type="PANTHER" id="PTHR30622">
    <property type="entry name" value="UNDECAPRENYL-DIPHOSPHATASE"/>
    <property type="match status" value="1"/>
</dbReference>
<dbReference type="PANTHER" id="PTHR30622:SF3">
    <property type="entry name" value="UNDECAPRENYL-DIPHOSPHATASE"/>
    <property type="match status" value="1"/>
</dbReference>
<dbReference type="Pfam" id="PF02673">
    <property type="entry name" value="BacA"/>
    <property type="match status" value="1"/>
</dbReference>
<organism>
    <name type="scientific">Rhodopseudomonas palustris (strain TIE-1)</name>
    <dbReference type="NCBI Taxonomy" id="395960"/>
    <lineage>
        <taxon>Bacteria</taxon>
        <taxon>Pseudomonadati</taxon>
        <taxon>Pseudomonadota</taxon>
        <taxon>Alphaproteobacteria</taxon>
        <taxon>Hyphomicrobiales</taxon>
        <taxon>Nitrobacteraceae</taxon>
        <taxon>Rhodopseudomonas</taxon>
    </lineage>
</organism>
<gene>
    <name evidence="1" type="primary">uppP</name>
    <name type="ordered locus">Rpal_0045</name>
</gene>
<reference key="1">
    <citation type="submission" date="2008-05" db="EMBL/GenBank/DDBJ databases">
        <title>Complete sequence of Rhodopseudomonas palustris TIE-1.</title>
        <authorList>
            <consortium name="US DOE Joint Genome Institute"/>
            <person name="Lucas S."/>
            <person name="Copeland A."/>
            <person name="Lapidus A."/>
            <person name="Glavina del Rio T."/>
            <person name="Dalin E."/>
            <person name="Tice H."/>
            <person name="Pitluck S."/>
            <person name="Chain P."/>
            <person name="Malfatti S."/>
            <person name="Shin M."/>
            <person name="Vergez L."/>
            <person name="Lang D."/>
            <person name="Schmutz J."/>
            <person name="Larimer F."/>
            <person name="Land M."/>
            <person name="Hauser L."/>
            <person name="Kyrpides N."/>
            <person name="Mikhailova N."/>
            <person name="Emerson D."/>
            <person name="Newman D.K."/>
            <person name="Roden E."/>
            <person name="Richardson P."/>
        </authorList>
    </citation>
    <scope>NUCLEOTIDE SEQUENCE [LARGE SCALE GENOMIC DNA]</scope>
    <source>
        <strain>TIE-1</strain>
    </source>
</reference>
<keyword id="KW-0046">Antibiotic resistance</keyword>
<keyword id="KW-0997">Cell inner membrane</keyword>
<keyword id="KW-1003">Cell membrane</keyword>
<keyword id="KW-0133">Cell shape</keyword>
<keyword id="KW-0961">Cell wall biogenesis/degradation</keyword>
<keyword id="KW-0378">Hydrolase</keyword>
<keyword id="KW-0472">Membrane</keyword>
<keyword id="KW-0573">Peptidoglycan synthesis</keyword>
<keyword id="KW-0812">Transmembrane</keyword>
<keyword id="KW-1133">Transmembrane helix</keyword>
<comment type="function">
    <text evidence="1">Catalyzes the dephosphorylation of undecaprenyl diphosphate (UPP). Confers resistance to bacitracin.</text>
</comment>
<comment type="catalytic activity">
    <reaction evidence="1">
        <text>di-trans,octa-cis-undecaprenyl diphosphate + H2O = di-trans,octa-cis-undecaprenyl phosphate + phosphate + H(+)</text>
        <dbReference type="Rhea" id="RHEA:28094"/>
        <dbReference type="ChEBI" id="CHEBI:15377"/>
        <dbReference type="ChEBI" id="CHEBI:15378"/>
        <dbReference type="ChEBI" id="CHEBI:43474"/>
        <dbReference type="ChEBI" id="CHEBI:58405"/>
        <dbReference type="ChEBI" id="CHEBI:60392"/>
        <dbReference type="EC" id="3.6.1.27"/>
    </reaction>
</comment>
<comment type="subcellular location">
    <subcellularLocation>
        <location evidence="1">Cell inner membrane</location>
        <topology evidence="1">Multi-pass membrane protein</topology>
    </subcellularLocation>
</comment>
<comment type="miscellaneous">
    <text>Bacitracin is thought to be involved in the inhibition of peptidoglycan synthesis by sequestering undecaprenyl diphosphate, thereby reducing the pool of lipid carrier available.</text>
</comment>
<comment type="similarity">
    <text evidence="1">Belongs to the UppP family.</text>
</comment>